<reference key="1">
    <citation type="journal article" date="1998" name="Nature">
        <title>The genome sequence of Rickettsia prowazekii and the origin of mitochondria.</title>
        <authorList>
            <person name="Andersson S.G.E."/>
            <person name="Zomorodipour A."/>
            <person name="Andersson J.O."/>
            <person name="Sicheritz-Ponten T."/>
            <person name="Alsmark U.C.M."/>
            <person name="Podowski R.M."/>
            <person name="Naeslund A.K."/>
            <person name="Eriksson A.-S."/>
            <person name="Winkler H.H."/>
            <person name="Kurland C.G."/>
        </authorList>
    </citation>
    <scope>NUCLEOTIDE SEQUENCE [LARGE SCALE GENOMIC DNA]</scope>
    <source>
        <strain>Madrid E</strain>
    </source>
</reference>
<proteinExistence type="predicted"/>
<organism>
    <name type="scientific">Rickettsia prowazekii (strain Madrid E)</name>
    <dbReference type="NCBI Taxonomy" id="272947"/>
    <lineage>
        <taxon>Bacteria</taxon>
        <taxon>Pseudomonadati</taxon>
        <taxon>Pseudomonadota</taxon>
        <taxon>Alphaproteobacteria</taxon>
        <taxon>Rickettsiales</taxon>
        <taxon>Rickettsiaceae</taxon>
        <taxon>Rickettsieae</taxon>
        <taxon>Rickettsia</taxon>
        <taxon>typhus group</taxon>
    </lineage>
</organism>
<keyword id="KW-1185">Reference proteome</keyword>
<dbReference type="EMBL" id="AJ235270">
    <property type="protein sequence ID" value="CAA14678.1"/>
    <property type="molecule type" value="Genomic_DNA"/>
</dbReference>
<dbReference type="PIR" id="G71732">
    <property type="entry name" value="G71732"/>
</dbReference>
<dbReference type="RefSeq" id="NP_220601.1">
    <property type="nucleotide sequence ID" value="NC_000963.1"/>
</dbReference>
<dbReference type="RefSeq" id="WP_004596007.1">
    <property type="nucleotide sequence ID" value="NC_000963.1"/>
</dbReference>
<dbReference type="STRING" id="272947.gene:17555296"/>
<dbReference type="EnsemblBacteria" id="CAA14678">
    <property type="protein sequence ID" value="CAA14678"/>
    <property type="gene ID" value="CAA14678"/>
</dbReference>
<dbReference type="KEGG" id="rpr:RP215"/>
<dbReference type="PATRIC" id="fig|272947.5.peg.222"/>
<dbReference type="eggNOG" id="ENOG502ZPZ7">
    <property type="taxonomic scope" value="Bacteria"/>
</dbReference>
<dbReference type="HOGENOM" id="CLU_2344824_0_0_5"/>
<dbReference type="OrthoDB" id="7160054at2"/>
<dbReference type="Proteomes" id="UP000002480">
    <property type="component" value="Chromosome"/>
</dbReference>
<dbReference type="InterPro" id="IPR022715">
    <property type="entry name" value="DUF2671"/>
</dbReference>
<dbReference type="Pfam" id="PF10877">
    <property type="entry name" value="DUF2671"/>
    <property type="match status" value="1"/>
</dbReference>
<feature type="chain" id="PRO_0000101333" description="Uncharacterized protein RP215">
    <location>
        <begin position="1"/>
        <end position="90"/>
    </location>
</feature>
<protein>
    <recommendedName>
        <fullName>Uncharacterized protein RP215</fullName>
    </recommendedName>
</protein>
<gene>
    <name type="ordered locus">RP215</name>
</gene>
<sequence>MQEKELSNNFLEEQNTFKEDNSPFSDIKYICQASLLITDSIRKGYDVTQLSNGDINVTEIRIVNVHYNWNSEKGKFVKTNQIEFNNNKGG</sequence>
<accession>Q9ZDV4</accession>
<name>Y215_RICPR</name>